<reference key="1">
    <citation type="submission" date="2002-10" db="EMBL/GenBank/DDBJ databases">
        <title>Genomic sequence analysis in the mouse T-complex region.</title>
        <authorList>
            <person name="Brathwaite M.E."/>
            <person name="Waeltz P."/>
            <person name="Qian Y."/>
            <person name="Dudekula D."/>
            <person name="Schlessinger D."/>
            <person name="Nagaraja R."/>
        </authorList>
    </citation>
    <scope>NUCLEOTIDE SEQUENCE [LARGE SCALE GENOMIC DNA]</scope>
    <source>
        <strain>129/SvJ</strain>
    </source>
</reference>
<reference key="2">
    <citation type="journal article" date="2005" name="Science">
        <title>The transcriptional landscape of the mammalian genome.</title>
        <authorList>
            <person name="Carninci P."/>
            <person name="Kasukawa T."/>
            <person name="Katayama S."/>
            <person name="Gough J."/>
            <person name="Frith M.C."/>
            <person name="Maeda N."/>
            <person name="Oyama R."/>
            <person name="Ravasi T."/>
            <person name="Lenhard B."/>
            <person name="Wells C."/>
            <person name="Kodzius R."/>
            <person name="Shimokawa K."/>
            <person name="Bajic V.B."/>
            <person name="Brenner S.E."/>
            <person name="Batalov S."/>
            <person name="Forrest A.R."/>
            <person name="Zavolan M."/>
            <person name="Davis M.J."/>
            <person name="Wilming L.G."/>
            <person name="Aidinis V."/>
            <person name="Allen J.E."/>
            <person name="Ambesi-Impiombato A."/>
            <person name="Apweiler R."/>
            <person name="Aturaliya R.N."/>
            <person name="Bailey T.L."/>
            <person name="Bansal M."/>
            <person name="Baxter L."/>
            <person name="Beisel K.W."/>
            <person name="Bersano T."/>
            <person name="Bono H."/>
            <person name="Chalk A.M."/>
            <person name="Chiu K.P."/>
            <person name="Choudhary V."/>
            <person name="Christoffels A."/>
            <person name="Clutterbuck D.R."/>
            <person name="Crowe M.L."/>
            <person name="Dalla E."/>
            <person name="Dalrymple B.P."/>
            <person name="de Bono B."/>
            <person name="Della Gatta G."/>
            <person name="di Bernardo D."/>
            <person name="Down T."/>
            <person name="Engstrom P."/>
            <person name="Fagiolini M."/>
            <person name="Faulkner G."/>
            <person name="Fletcher C.F."/>
            <person name="Fukushima T."/>
            <person name="Furuno M."/>
            <person name="Futaki S."/>
            <person name="Gariboldi M."/>
            <person name="Georgii-Hemming P."/>
            <person name="Gingeras T.R."/>
            <person name="Gojobori T."/>
            <person name="Green R.E."/>
            <person name="Gustincich S."/>
            <person name="Harbers M."/>
            <person name="Hayashi Y."/>
            <person name="Hensch T.K."/>
            <person name="Hirokawa N."/>
            <person name="Hill D."/>
            <person name="Huminiecki L."/>
            <person name="Iacono M."/>
            <person name="Ikeo K."/>
            <person name="Iwama A."/>
            <person name="Ishikawa T."/>
            <person name="Jakt M."/>
            <person name="Kanapin A."/>
            <person name="Katoh M."/>
            <person name="Kawasawa Y."/>
            <person name="Kelso J."/>
            <person name="Kitamura H."/>
            <person name="Kitano H."/>
            <person name="Kollias G."/>
            <person name="Krishnan S.P."/>
            <person name="Kruger A."/>
            <person name="Kummerfeld S.K."/>
            <person name="Kurochkin I.V."/>
            <person name="Lareau L.F."/>
            <person name="Lazarevic D."/>
            <person name="Lipovich L."/>
            <person name="Liu J."/>
            <person name="Liuni S."/>
            <person name="McWilliam S."/>
            <person name="Madan Babu M."/>
            <person name="Madera M."/>
            <person name="Marchionni L."/>
            <person name="Matsuda H."/>
            <person name="Matsuzawa S."/>
            <person name="Miki H."/>
            <person name="Mignone F."/>
            <person name="Miyake S."/>
            <person name="Morris K."/>
            <person name="Mottagui-Tabar S."/>
            <person name="Mulder N."/>
            <person name="Nakano N."/>
            <person name="Nakauchi H."/>
            <person name="Ng P."/>
            <person name="Nilsson R."/>
            <person name="Nishiguchi S."/>
            <person name="Nishikawa S."/>
            <person name="Nori F."/>
            <person name="Ohara O."/>
            <person name="Okazaki Y."/>
            <person name="Orlando V."/>
            <person name="Pang K.C."/>
            <person name="Pavan W.J."/>
            <person name="Pavesi G."/>
            <person name="Pesole G."/>
            <person name="Petrovsky N."/>
            <person name="Piazza S."/>
            <person name="Reed J."/>
            <person name="Reid J.F."/>
            <person name="Ring B.Z."/>
            <person name="Ringwald M."/>
            <person name="Rost B."/>
            <person name="Ruan Y."/>
            <person name="Salzberg S.L."/>
            <person name="Sandelin A."/>
            <person name="Schneider C."/>
            <person name="Schoenbach C."/>
            <person name="Sekiguchi K."/>
            <person name="Semple C.A."/>
            <person name="Seno S."/>
            <person name="Sessa L."/>
            <person name="Sheng Y."/>
            <person name="Shibata Y."/>
            <person name="Shimada H."/>
            <person name="Shimada K."/>
            <person name="Silva D."/>
            <person name="Sinclair B."/>
            <person name="Sperling S."/>
            <person name="Stupka E."/>
            <person name="Sugiura K."/>
            <person name="Sultana R."/>
            <person name="Takenaka Y."/>
            <person name="Taki K."/>
            <person name="Tammoja K."/>
            <person name="Tan S.L."/>
            <person name="Tang S."/>
            <person name="Taylor M.S."/>
            <person name="Tegner J."/>
            <person name="Teichmann S.A."/>
            <person name="Ueda H.R."/>
            <person name="van Nimwegen E."/>
            <person name="Verardo R."/>
            <person name="Wei C.L."/>
            <person name="Yagi K."/>
            <person name="Yamanishi H."/>
            <person name="Zabarovsky E."/>
            <person name="Zhu S."/>
            <person name="Zimmer A."/>
            <person name="Hide W."/>
            <person name="Bult C."/>
            <person name="Grimmond S.M."/>
            <person name="Teasdale R.D."/>
            <person name="Liu E.T."/>
            <person name="Brusic V."/>
            <person name="Quackenbush J."/>
            <person name="Wahlestedt C."/>
            <person name="Mattick J.S."/>
            <person name="Hume D.A."/>
            <person name="Kai C."/>
            <person name="Sasaki D."/>
            <person name="Tomaru Y."/>
            <person name="Fukuda S."/>
            <person name="Kanamori-Katayama M."/>
            <person name="Suzuki M."/>
            <person name="Aoki J."/>
            <person name="Arakawa T."/>
            <person name="Iida J."/>
            <person name="Imamura K."/>
            <person name="Itoh M."/>
            <person name="Kato T."/>
            <person name="Kawaji H."/>
            <person name="Kawagashira N."/>
            <person name="Kawashima T."/>
            <person name="Kojima M."/>
            <person name="Kondo S."/>
            <person name="Konno H."/>
            <person name="Nakano K."/>
            <person name="Ninomiya N."/>
            <person name="Nishio T."/>
            <person name="Okada M."/>
            <person name="Plessy C."/>
            <person name="Shibata K."/>
            <person name="Shiraki T."/>
            <person name="Suzuki S."/>
            <person name="Tagami M."/>
            <person name="Waki K."/>
            <person name="Watahiki A."/>
            <person name="Okamura-Oho Y."/>
            <person name="Suzuki H."/>
            <person name="Kawai J."/>
            <person name="Hayashizaki Y."/>
        </authorList>
    </citation>
    <scope>NUCLEOTIDE SEQUENCE [LARGE SCALE MRNA]</scope>
    <source>
        <strain>C57BL/6J</strain>
        <tissue>Spleen</tissue>
    </source>
</reference>
<reference key="3">
    <citation type="journal article" date="2004" name="Genome Res.">
        <title>The status, quality, and expansion of the NIH full-length cDNA project: the Mammalian Gene Collection (MGC).</title>
        <authorList>
            <consortium name="The MGC Project Team"/>
        </authorList>
    </citation>
    <scope>NUCLEOTIDE SEQUENCE [LARGE SCALE MRNA]</scope>
    <source>
        <strain>FVB/N</strain>
        <tissue>Colon</tissue>
    </source>
</reference>
<reference key="4">
    <citation type="journal article" date="2010" name="Cell">
        <title>A tissue-specific atlas of mouse protein phosphorylation and expression.</title>
        <authorList>
            <person name="Huttlin E.L."/>
            <person name="Jedrychowski M.P."/>
            <person name="Elias J.E."/>
            <person name="Goswami T."/>
            <person name="Rad R."/>
            <person name="Beausoleil S.A."/>
            <person name="Villen J."/>
            <person name="Haas W."/>
            <person name="Sowa M.E."/>
            <person name="Gygi S.P."/>
        </authorList>
    </citation>
    <scope>IDENTIFICATION BY MASS SPECTROMETRY [LARGE SCALE ANALYSIS]</scope>
    <source>
        <tissue>Lung</tissue>
        <tissue>Spleen</tissue>
    </source>
</reference>
<reference key="5">
    <citation type="journal article" date="2016" name="PLoS ONE">
        <title>USP7 and TDP-43: pleiotropic regulation of cryptochrome protein stability paces the oscillation of the mammalian circadian clock.</title>
        <authorList>
            <person name="Hirano A."/>
            <person name="Nakagawa T."/>
            <person name="Yoshitane H."/>
            <person name="Oyama M."/>
            <person name="Kozuka-Hata H."/>
            <person name="Lanjakornsiripan D."/>
            <person name="Fukada Y."/>
        </authorList>
    </citation>
    <scope>INTERACTION WITH CRY1</scope>
</reference>
<proteinExistence type="evidence at protein level"/>
<name>KCTD5_MOUSE</name>
<gene>
    <name type="primary">Kctd5</name>
</gene>
<comment type="function">
    <text evidence="1">Its interaction with CUL3 suggests that it may act as a substrate adapter in some E3 ligase complex (By similarity). Does not affect the function of Kv channel Kv2.1/KCNB1, Kv1.2/KCNA2, Kv4.2/KCND2 and Kv3.4/KCNC4 (By similarity).</text>
</comment>
<comment type="subunit">
    <text evidence="1 3">Homopentamer (By similarity). Interacts (via C-terminus) with GRASP55/GORASP2. Interacts with CUL3 and with ubiquitinated proteins (By similarity). Interacts with CRY1 (PubMed:27123980).</text>
</comment>
<comment type="subcellular location">
    <subcellularLocation>
        <location evidence="1">Cytoplasm</location>
        <location evidence="1">Cytosol</location>
    </subcellularLocation>
    <subcellularLocation>
        <location evidence="1">Cytoplasm</location>
    </subcellularLocation>
    <subcellularLocation>
        <location evidence="1">Nucleus</location>
    </subcellularLocation>
    <text evidence="1">Predominantly cytoplasmic, translocated to the nucleus upon interaction with Rep proteins.</text>
</comment>
<comment type="domain">
    <text evidence="1">The BTB (POZ) domain is atypical and mediates the formation of a homopentamer instead of a homotetramer (By similarity). Homopentamerization is due to the presence of 4 residues in the BTB (POZ) domain: Leu-56, Gly-100, Val-112 and Ala-118 (By similarity).</text>
</comment>
<accession>Q8VC57</accession>
<accession>Q3UPC0</accession>
<dbReference type="EMBL" id="AY162410">
    <property type="protein sequence ID" value="AAO17163.1"/>
    <property type="molecule type" value="Genomic_DNA"/>
</dbReference>
<dbReference type="EMBL" id="AK143644">
    <property type="protein sequence ID" value="BAE25476.1"/>
    <property type="molecule type" value="mRNA"/>
</dbReference>
<dbReference type="EMBL" id="BC021777">
    <property type="protein sequence ID" value="AAH21777.1"/>
    <property type="molecule type" value="mRNA"/>
</dbReference>
<dbReference type="CCDS" id="CCDS28473.1"/>
<dbReference type="RefSeq" id="NP_081284.2">
    <property type="nucleotide sequence ID" value="NM_027008.2"/>
</dbReference>
<dbReference type="PDB" id="8JKB">
    <property type="method" value="EM"/>
    <property type="resolution" value="3.27 A"/>
    <property type="chains" value="A/C/D/E/H=1-234"/>
</dbReference>
<dbReference type="PDBsum" id="8JKB"/>
<dbReference type="EMDB" id="EMD-36367"/>
<dbReference type="SMR" id="Q8VC57"/>
<dbReference type="BioGRID" id="213321">
    <property type="interactions" value="87"/>
</dbReference>
<dbReference type="FunCoup" id="Q8VC57">
    <property type="interactions" value="1517"/>
</dbReference>
<dbReference type="IntAct" id="Q8VC57">
    <property type="interactions" value="87"/>
</dbReference>
<dbReference type="STRING" id="10090.ENSMUSP00000017090"/>
<dbReference type="iPTMnet" id="Q8VC57"/>
<dbReference type="PhosphoSitePlus" id="Q8VC57"/>
<dbReference type="PaxDb" id="10090-ENSMUSP00000017090"/>
<dbReference type="ProteomicsDB" id="263422"/>
<dbReference type="Pumba" id="Q8VC57"/>
<dbReference type="DNASU" id="69259"/>
<dbReference type="GeneID" id="69259"/>
<dbReference type="KEGG" id="mmu:69259"/>
<dbReference type="UCSC" id="uc008auh.2">
    <property type="organism name" value="mouse"/>
</dbReference>
<dbReference type="AGR" id="MGI:1916509"/>
<dbReference type="CTD" id="54442"/>
<dbReference type="MGI" id="MGI:1916509">
    <property type="gene designation" value="Kctd5"/>
</dbReference>
<dbReference type="eggNOG" id="KOG2715">
    <property type="taxonomic scope" value="Eukaryota"/>
</dbReference>
<dbReference type="InParanoid" id="Q8VC57"/>
<dbReference type="OrthoDB" id="1244179at2759"/>
<dbReference type="PhylomeDB" id="Q8VC57"/>
<dbReference type="TreeFam" id="TF313754"/>
<dbReference type="BioGRID-ORCS" id="69259">
    <property type="hits" value="19 hits in 81 CRISPR screens"/>
</dbReference>
<dbReference type="ChiTaRS" id="Kctd5">
    <property type="organism name" value="mouse"/>
</dbReference>
<dbReference type="PRO" id="PR:Q8VC57"/>
<dbReference type="Proteomes" id="UP000000589">
    <property type="component" value="Unplaced"/>
</dbReference>
<dbReference type="RNAct" id="Q8VC57">
    <property type="molecule type" value="protein"/>
</dbReference>
<dbReference type="GO" id="GO:0005829">
    <property type="term" value="C:cytosol"/>
    <property type="evidence" value="ECO:0000250"/>
    <property type="project" value="UniProtKB"/>
</dbReference>
<dbReference type="GO" id="GO:0005634">
    <property type="term" value="C:nucleus"/>
    <property type="evidence" value="ECO:0007669"/>
    <property type="project" value="UniProtKB-SubCell"/>
</dbReference>
<dbReference type="GO" id="GO:0044877">
    <property type="term" value="F:protein-containing complex binding"/>
    <property type="evidence" value="ECO:0000266"/>
    <property type="project" value="MGI"/>
</dbReference>
<dbReference type="GO" id="GO:0051260">
    <property type="term" value="P:protein homooligomerization"/>
    <property type="evidence" value="ECO:0007669"/>
    <property type="project" value="InterPro"/>
</dbReference>
<dbReference type="CDD" id="cd18390">
    <property type="entry name" value="BTB_POZ_KCTD5"/>
    <property type="match status" value="1"/>
</dbReference>
<dbReference type="FunFam" id="3.30.70.2000:FF:000001">
    <property type="entry name" value="Potassium channel tetramerization domain-containing 17"/>
    <property type="match status" value="1"/>
</dbReference>
<dbReference type="FunFam" id="3.30.710.10:FF:000005">
    <property type="entry name" value="Potassium channel tetramerization domain-containing 17"/>
    <property type="match status" value="1"/>
</dbReference>
<dbReference type="Gene3D" id="3.30.70.2000">
    <property type="match status" value="1"/>
</dbReference>
<dbReference type="Gene3D" id="6.10.140.750">
    <property type="match status" value="1"/>
</dbReference>
<dbReference type="Gene3D" id="3.30.710.10">
    <property type="entry name" value="Potassium Channel Kv1.1, Chain A"/>
    <property type="match status" value="1"/>
</dbReference>
<dbReference type="InterPro" id="IPR000210">
    <property type="entry name" value="BTB/POZ_dom"/>
</dbReference>
<dbReference type="InterPro" id="IPR011333">
    <property type="entry name" value="SKP1/BTB/POZ_sf"/>
</dbReference>
<dbReference type="InterPro" id="IPR003131">
    <property type="entry name" value="T1-type_BTB"/>
</dbReference>
<dbReference type="PANTHER" id="PTHR14958:SF12">
    <property type="entry name" value="BTB_POZ DOMAIN-CONTAINING PROTEIN KCTD5"/>
    <property type="match status" value="1"/>
</dbReference>
<dbReference type="PANTHER" id="PTHR14958">
    <property type="entry name" value="POTASSIUM CHANNEL TETRAMERISATION DOMAIN CONTAINING PROTEIN"/>
    <property type="match status" value="1"/>
</dbReference>
<dbReference type="Pfam" id="PF02214">
    <property type="entry name" value="BTB_2"/>
    <property type="match status" value="1"/>
</dbReference>
<dbReference type="SMART" id="SM00225">
    <property type="entry name" value="BTB"/>
    <property type="match status" value="1"/>
</dbReference>
<dbReference type="SUPFAM" id="SSF54695">
    <property type="entry name" value="POZ domain"/>
    <property type="match status" value="1"/>
</dbReference>
<feature type="initiator methionine" description="Removed" evidence="1">
    <location>
        <position position="1"/>
    </location>
</feature>
<feature type="chain" id="PRO_0000191292" description="BTB/POZ domain-containing protein KCTD5">
    <location>
        <begin position="2"/>
        <end position="234"/>
    </location>
</feature>
<feature type="domain" description="BTB">
    <location>
        <begin position="44"/>
        <end position="146"/>
    </location>
</feature>
<feature type="region of interest" description="Disordered" evidence="2">
    <location>
        <begin position="213"/>
        <end position="234"/>
    </location>
</feature>
<feature type="compositionally biased region" description="Basic and acidic residues" evidence="2">
    <location>
        <begin position="220"/>
        <end position="234"/>
    </location>
</feature>
<feature type="modified residue" description="N-acetylalanine" evidence="1">
    <location>
        <position position="2"/>
    </location>
</feature>
<feature type="sequence conflict" description="In Ref. 2; BAE25476." evidence="4" ref="2">
    <original>R</original>
    <variation>K</variation>
    <location>
        <position position="148"/>
    </location>
</feature>
<feature type="strand" evidence="5">
    <location>
        <begin position="157"/>
        <end position="160"/>
    </location>
</feature>
<feature type="strand" evidence="5">
    <location>
        <begin position="163"/>
        <end position="165"/>
    </location>
</feature>
<feature type="helix" evidence="5">
    <location>
        <begin position="169"/>
        <end position="173"/>
    </location>
</feature>
<feature type="strand" evidence="5">
    <location>
        <begin position="204"/>
        <end position="207"/>
    </location>
</feature>
<sequence>MAENHCELLPPAPSGLGAGLGGGLCRRCSAGMGALAQRPGGVSKWVRLNVGGTYFLTTRQTLCRDPKSFLYRLCQADPDLDSDKDETGAYLIDRDPTYFGPVLNYLRHGKLVINKDLAEEGVLEEAEFYNITSLIKLVKDKIRERDSRISQMPVKHVYRVLQCQEEELTQMVSTMSDGWKFEQLVSIGSSYNYGNEDQAEFLCVVSKELHNTPYGTTSEPSEKAKILQERGSRM</sequence>
<protein>
    <recommendedName>
        <fullName>BTB/POZ domain-containing protein KCTD5</fullName>
    </recommendedName>
</protein>
<organism>
    <name type="scientific">Mus musculus</name>
    <name type="common">Mouse</name>
    <dbReference type="NCBI Taxonomy" id="10090"/>
    <lineage>
        <taxon>Eukaryota</taxon>
        <taxon>Metazoa</taxon>
        <taxon>Chordata</taxon>
        <taxon>Craniata</taxon>
        <taxon>Vertebrata</taxon>
        <taxon>Euteleostomi</taxon>
        <taxon>Mammalia</taxon>
        <taxon>Eutheria</taxon>
        <taxon>Euarchontoglires</taxon>
        <taxon>Glires</taxon>
        <taxon>Rodentia</taxon>
        <taxon>Myomorpha</taxon>
        <taxon>Muroidea</taxon>
        <taxon>Muridae</taxon>
        <taxon>Murinae</taxon>
        <taxon>Mus</taxon>
        <taxon>Mus</taxon>
    </lineage>
</organism>
<keyword id="KW-0002">3D-structure</keyword>
<keyword id="KW-0007">Acetylation</keyword>
<keyword id="KW-0963">Cytoplasm</keyword>
<keyword id="KW-0539">Nucleus</keyword>
<keyword id="KW-1185">Reference proteome</keyword>
<evidence type="ECO:0000250" key="1">
    <source>
        <dbReference type="UniProtKB" id="Q9NXV2"/>
    </source>
</evidence>
<evidence type="ECO:0000256" key="2">
    <source>
        <dbReference type="SAM" id="MobiDB-lite"/>
    </source>
</evidence>
<evidence type="ECO:0000269" key="3">
    <source>
    </source>
</evidence>
<evidence type="ECO:0000305" key="4"/>
<evidence type="ECO:0007829" key="5">
    <source>
        <dbReference type="PDB" id="8JKB"/>
    </source>
</evidence>